<feature type="chain" id="PRO_0000359081" description="Acetyl-coenzyme A carboxylase carboxyl transferase subunit beta">
    <location>
        <begin position="1"/>
        <end position="293"/>
    </location>
</feature>
<feature type="domain" description="CoA carboxyltransferase N-terminal" evidence="2">
    <location>
        <begin position="29"/>
        <end position="293"/>
    </location>
</feature>
<feature type="zinc finger region" description="C4-type" evidence="1">
    <location>
        <begin position="33"/>
        <end position="55"/>
    </location>
</feature>
<feature type="binding site" evidence="1">
    <location>
        <position position="33"/>
    </location>
    <ligand>
        <name>Zn(2+)</name>
        <dbReference type="ChEBI" id="CHEBI:29105"/>
    </ligand>
</feature>
<feature type="binding site" evidence="1">
    <location>
        <position position="36"/>
    </location>
    <ligand>
        <name>Zn(2+)</name>
        <dbReference type="ChEBI" id="CHEBI:29105"/>
    </ligand>
</feature>
<feature type="binding site" evidence="1">
    <location>
        <position position="52"/>
    </location>
    <ligand>
        <name>Zn(2+)</name>
        <dbReference type="ChEBI" id="CHEBI:29105"/>
    </ligand>
</feature>
<feature type="binding site" evidence="1">
    <location>
        <position position="55"/>
    </location>
    <ligand>
        <name>Zn(2+)</name>
        <dbReference type="ChEBI" id="CHEBI:29105"/>
    </ligand>
</feature>
<name>ACCD_PARMW</name>
<gene>
    <name evidence="1" type="primary">accD</name>
    <name type="ordered locus">SYNW0788</name>
</gene>
<organism>
    <name type="scientific">Parasynechococcus marenigrum (strain WH8102)</name>
    <dbReference type="NCBI Taxonomy" id="84588"/>
    <lineage>
        <taxon>Bacteria</taxon>
        <taxon>Bacillati</taxon>
        <taxon>Cyanobacteriota</taxon>
        <taxon>Cyanophyceae</taxon>
        <taxon>Synechococcales</taxon>
        <taxon>Prochlorococcaceae</taxon>
        <taxon>Parasynechococcus</taxon>
        <taxon>Parasynechococcus marenigrum</taxon>
    </lineage>
</organism>
<proteinExistence type="inferred from homology"/>
<protein>
    <recommendedName>
        <fullName evidence="1">Acetyl-coenzyme A carboxylase carboxyl transferase subunit beta</fullName>
        <shortName evidence="1">ACCase subunit beta</shortName>
        <shortName evidence="1">Acetyl-CoA carboxylase carboxyltransferase subunit beta</shortName>
        <ecNumber evidence="1">2.1.3.15</ecNumber>
    </recommendedName>
</protein>
<comment type="function">
    <text evidence="1">Component of the acetyl coenzyme A carboxylase (ACC) complex. Biotin carboxylase (BC) catalyzes the carboxylation of biotin on its carrier protein (BCCP) and then the CO(2) group is transferred by the transcarboxylase to acetyl-CoA to form malonyl-CoA.</text>
</comment>
<comment type="catalytic activity">
    <reaction evidence="1">
        <text>N(6)-carboxybiotinyl-L-lysyl-[protein] + acetyl-CoA = N(6)-biotinyl-L-lysyl-[protein] + malonyl-CoA</text>
        <dbReference type="Rhea" id="RHEA:54728"/>
        <dbReference type="Rhea" id="RHEA-COMP:10505"/>
        <dbReference type="Rhea" id="RHEA-COMP:10506"/>
        <dbReference type="ChEBI" id="CHEBI:57288"/>
        <dbReference type="ChEBI" id="CHEBI:57384"/>
        <dbReference type="ChEBI" id="CHEBI:83144"/>
        <dbReference type="ChEBI" id="CHEBI:83145"/>
        <dbReference type="EC" id="2.1.3.15"/>
    </reaction>
</comment>
<comment type="cofactor">
    <cofactor evidence="1">
        <name>Zn(2+)</name>
        <dbReference type="ChEBI" id="CHEBI:29105"/>
    </cofactor>
    <text evidence="1">Binds 1 zinc ion per subunit.</text>
</comment>
<comment type="pathway">
    <text evidence="1">Lipid metabolism; malonyl-CoA biosynthesis; malonyl-CoA from acetyl-CoA: step 1/1.</text>
</comment>
<comment type="subunit">
    <text evidence="1">Acetyl-CoA carboxylase is a heterohexamer composed of biotin carboxyl carrier protein (AccB), biotin carboxylase (AccC) and two subunits each of ACCase subunit alpha (AccA) and ACCase subunit beta (AccD).</text>
</comment>
<comment type="subcellular location">
    <subcellularLocation>
        <location evidence="1">Cytoplasm</location>
    </subcellularLocation>
</comment>
<comment type="similarity">
    <text evidence="1">Belongs to the AccD/PCCB family.</text>
</comment>
<reference key="1">
    <citation type="journal article" date="2003" name="Nature">
        <title>The genome of a motile marine Synechococcus.</title>
        <authorList>
            <person name="Palenik B."/>
            <person name="Brahamsha B."/>
            <person name="Larimer F.W."/>
            <person name="Land M.L."/>
            <person name="Hauser L."/>
            <person name="Chain P."/>
            <person name="Lamerdin J.E."/>
            <person name="Regala W."/>
            <person name="Allen E.E."/>
            <person name="McCarren J."/>
            <person name="Paulsen I.T."/>
            <person name="Dufresne A."/>
            <person name="Partensky F."/>
            <person name="Webb E.A."/>
            <person name="Waterbury J."/>
        </authorList>
    </citation>
    <scope>NUCLEOTIDE SEQUENCE [LARGE SCALE GENOMIC DNA]</scope>
    <source>
        <strain>WH8102</strain>
    </source>
</reference>
<keyword id="KW-0067">ATP-binding</keyword>
<keyword id="KW-0963">Cytoplasm</keyword>
<keyword id="KW-0275">Fatty acid biosynthesis</keyword>
<keyword id="KW-0276">Fatty acid metabolism</keyword>
<keyword id="KW-0444">Lipid biosynthesis</keyword>
<keyword id="KW-0443">Lipid metabolism</keyword>
<keyword id="KW-0479">Metal-binding</keyword>
<keyword id="KW-0547">Nucleotide-binding</keyword>
<keyword id="KW-0808">Transferase</keyword>
<keyword id="KW-0862">Zinc</keyword>
<keyword id="KW-0863">Zinc-finger</keyword>
<evidence type="ECO:0000255" key="1">
    <source>
        <dbReference type="HAMAP-Rule" id="MF_01395"/>
    </source>
</evidence>
<evidence type="ECO:0000255" key="2">
    <source>
        <dbReference type="PROSITE-ProRule" id="PRU01136"/>
    </source>
</evidence>
<dbReference type="EC" id="2.1.3.15" evidence="1"/>
<dbReference type="EMBL" id="BX569691">
    <property type="protein sequence ID" value="CAE07303.1"/>
    <property type="molecule type" value="Genomic_DNA"/>
</dbReference>
<dbReference type="RefSeq" id="WP_011127653.1">
    <property type="nucleotide sequence ID" value="NC_005070.1"/>
</dbReference>
<dbReference type="SMR" id="Q7U836"/>
<dbReference type="STRING" id="84588.SYNW0788"/>
<dbReference type="KEGG" id="syw:SYNW0788"/>
<dbReference type="eggNOG" id="COG0777">
    <property type="taxonomic scope" value="Bacteria"/>
</dbReference>
<dbReference type="HOGENOM" id="CLU_015486_1_1_3"/>
<dbReference type="UniPathway" id="UPA00655">
    <property type="reaction ID" value="UER00711"/>
</dbReference>
<dbReference type="Proteomes" id="UP000001422">
    <property type="component" value="Chromosome"/>
</dbReference>
<dbReference type="GO" id="GO:0009317">
    <property type="term" value="C:acetyl-CoA carboxylase complex"/>
    <property type="evidence" value="ECO:0007669"/>
    <property type="project" value="InterPro"/>
</dbReference>
<dbReference type="GO" id="GO:0003989">
    <property type="term" value="F:acetyl-CoA carboxylase activity"/>
    <property type="evidence" value="ECO:0007669"/>
    <property type="project" value="InterPro"/>
</dbReference>
<dbReference type="GO" id="GO:0005524">
    <property type="term" value="F:ATP binding"/>
    <property type="evidence" value="ECO:0007669"/>
    <property type="project" value="UniProtKB-KW"/>
</dbReference>
<dbReference type="GO" id="GO:0016743">
    <property type="term" value="F:carboxyl- or carbamoyltransferase activity"/>
    <property type="evidence" value="ECO:0007669"/>
    <property type="project" value="UniProtKB-UniRule"/>
</dbReference>
<dbReference type="GO" id="GO:0008270">
    <property type="term" value="F:zinc ion binding"/>
    <property type="evidence" value="ECO:0007669"/>
    <property type="project" value="UniProtKB-UniRule"/>
</dbReference>
<dbReference type="GO" id="GO:0006633">
    <property type="term" value="P:fatty acid biosynthetic process"/>
    <property type="evidence" value="ECO:0007669"/>
    <property type="project" value="UniProtKB-KW"/>
</dbReference>
<dbReference type="GO" id="GO:2001295">
    <property type="term" value="P:malonyl-CoA biosynthetic process"/>
    <property type="evidence" value="ECO:0007669"/>
    <property type="project" value="UniProtKB-UniRule"/>
</dbReference>
<dbReference type="Gene3D" id="3.90.226.10">
    <property type="entry name" value="2-enoyl-CoA Hydratase, Chain A, domain 1"/>
    <property type="match status" value="1"/>
</dbReference>
<dbReference type="HAMAP" id="MF_01395">
    <property type="entry name" value="AcetylCoA_CT_beta"/>
    <property type="match status" value="1"/>
</dbReference>
<dbReference type="InterPro" id="IPR034733">
    <property type="entry name" value="AcCoA_carboxyl_beta"/>
</dbReference>
<dbReference type="InterPro" id="IPR000438">
    <property type="entry name" value="Acetyl_CoA_COase_Trfase_b_su"/>
</dbReference>
<dbReference type="InterPro" id="IPR029045">
    <property type="entry name" value="ClpP/crotonase-like_dom_sf"/>
</dbReference>
<dbReference type="InterPro" id="IPR011762">
    <property type="entry name" value="COA_CT_N"/>
</dbReference>
<dbReference type="InterPro" id="IPR041010">
    <property type="entry name" value="Znf-ACC"/>
</dbReference>
<dbReference type="NCBIfam" id="TIGR00515">
    <property type="entry name" value="accD"/>
    <property type="match status" value="1"/>
</dbReference>
<dbReference type="PANTHER" id="PTHR42995">
    <property type="entry name" value="ACETYL-COENZYME A CARBOXYLASE CARBOXYL TRANSFERASE SUBUNIT BETA, CHLOROPLASTIC"/>
    <property type="match status" value="1"/>
</dbReference>
<dbReference type="PANTHER" id="PTHR42995:SF5">
    <property type="entry name" value="ACETYL-COENZYME A CARBOXYLASE CARBOXYL TRANSFERASE SUBUNIT BETA, CHLOROPLASTIC"/>
    <property type="match status" value="1"/>
</dbReference>
<dbReference type="Pfam" id="PF01039">
    <property type="entry name" value="Carboxyl_trans"/>
    <property type="match status" value="1"/>
</dbReference>
<dbReference type="Pfam" id="PF17848">
    <property type="entry name" value="Zn_ribbon_ACC"/>
    <property type="match status" value="1"/>
</dbReference>
<dbReference type="PRINTS" id="PR01070">
    <property type="entry name" value="ACCCTRFRASEB"/>
</dbReference>
<dbReference type="SUPFAM" id="SSF52096">
    <property type="entry name" value="ClpP/crotonase"/>
    <property type="match status" value="1"/>
</dbReference>
<dbReference type="PROSITE" id="PS50980">
    <property type="entry name" value="COA_CT_NTER"/>
    <property type="match status" value="1"/>
</dbReference>
<sequence length="293" mass="32028">MSLFDWFADRRKGQSTGKITQEPEEGDGLWSKCPECGLVVYVKDLKGNASVCAGCGHHHRIDSHERIALIADPGSFEALNEALEPTDPLTFKDRRAYADRLRESQAATGLRDGVVTGLCRVDGLAMALAVMDFRFMGGSMGSVVGEKITRLVEEATARRLPLLIVCASGGARMQEGMLSLMQMAKISGALERHREAELLYMPLLTHPTTGGVTASFAMLGDLILAEPKALIGFAGRRVIEQTLREKLPDNFQTAEYLQDHGFVDTIVPRTQLRSSLASLLRLHGCRPMEITSA</sequence>
<accession>Q7U836</accession>